<gene>
    <name type="ORF">SPAC7D4.13c</name>
</gene>
<keyword id="KW-0496">Mitochondrion</keyword>
<keyword id="KW-1185">Reference proteome</keyword>
<accession>O14268</accession>
<name>YFPD_SCHPO</name>
<dbReference type="EMBL" id="CU329670">
    <property type="protein sequence ID" value="CAB16730.2"/>
    <property type="molecule type" value="Genomic_DNA"/>
</dbReference>
<dbReference type="PIR" id="T39091">
    <property type="entry name" value="T39091"/>
</dbReference>
<dbReference type="RefSeq" id="NP_593845.1">
    <property type="nucleotide sequence ID" value="NM_001019274.2"/>
</dbReference>
<dbReference type="BioGRID" id="277999">
    <property type="interactions" value="5"/>
</dbReference>
<dbReference type="iPTMnet" id="O14268"/>
<dbReference type="SwissPalm" id="O14268"/>
<dbReference type="PaxDb" id="4896-SPAC7D4.13c.1"/>
<dbReference type="EnsemblFungi" id="SPAC7D4.13c.1">
    <property type="protein sequence ID" value="SPAC7D4.13c.1:pep"/>
    <property type="gene ID" value="SPAC7D4.13c"/>
</dbReference>
<dbReference type="KEGG" id="spo:2541497"/>
<dbReference type="PomBase" id="SPAC7D4.13c"/>
<dbReference type="VEuPathDB" id="FungiDB:SPAC7D4.13c"/>
<dbReference type="HOGENOM" id="CLU_891850_0_0_1"/>
<dbReference type="InParanoid" id="O14268"/>
<dbReference type="OMA" id="VGCHTKS"/>
<dbReference type="PRO" id="PR:O14268"/>
<dbReference type="Proteomes" id="UP000002485">
    <property type="component" value="Chromosome I"/>
</dbReference>
<dbReference type="GO" id="GO:0005739">
    <property type="term" value="C:mitochondrion"/>
    <property type="evidence" value="ECO:0007005"/>
    <property type="project" value="PomBase"/>
</dbReference>
<evidence type="ECO:0000269" key="1">
    <source>
    </source>
</evidence>
<comment type="subcellular location">
    <subcellularLocation>
        <location evidence="1">Mitochondrion</location>
    </subcellularLocation>
</comment>
<organism>
    <name type="scientific">Schizosaccharomyces pombe (strain 972 / ATCC 24843)</name>
    <name type="common">Fission yeast</name>
    <dbReference type="NCBI Taxonomy" id="284812"/>
    <lineage>
        <taxon>Eukaryota</taxon>
        <taxon>Fungi</taxon>
        <taxon>Dikarya</taxon>
        <taxon>Ascomycota</taxon>
        <taxon>Taphrinomycotina</taxon>
        <taxon>Schizosaccharomycetes</taxon>
        <taxon>Schizosaccharomycetales</taxon>
        <taxon>Schizosaccharomycetaceae</taxon>
        <taxon>Schizosaccharomyces</taxon>
    </lineage>
</organism>
<protein>
    <recommendedName>
        <fullName>Uncharacterized protein C7D4.13c</fullName>
    </recommendedName>
</protein>
<proteinExistence type="predicted"/>
<sequence>MSLFIGTHNIKNSAIQLLKTKLKNEFLKGVKCITKYPENAHSIFKVQEYTGYKGVTFIVSTKWNLTVDSIHKLIPEIKSSPSACLLLVNQPYPVIEKITDILTKHGITNANLLEFSKSSLLHPFKRNRHLLSFVPYPMTAETLGDISWSFSRRENMKFEKDQQYILSKFKSPRNLLIPYPSFLIQKFLDMAILPPMAALRILFYQYSKASTMSLTDDFYNKYVLENLNIINNLQIFLHLDLEPLHIKSLAKARKRFYETDLKTTFLNAFSRDELLMLVNYFIFRGTELKLSVSMNLAFRDILLSSAYLNKTK</sequence>
<feature type="chain" id="PRO_0000304074" description="Uncharacterized protein C7D4.13c">
    <location>
        <begin position="1"/>
        <end position="312"/>
    </location>
</feature>
<reference key="1">
    <citation type="journal article" date="2002" name="Nature">
        <title>The genome sequence of Schizosaccharomyces pombe.</title>
        <authorList>
            <person name="Wood V."/>
            <person name="Gwilliam R."/>
            <person name="Rajandream M.A."/>
            <person name="Lyne M.H."/>
            <person name="Lyne R."/>
            <person name="Stewart A."/>
            <person name="Sgouros J.G."/>
            <person name="Peat N."/>
            <person name="Hayles J."/>
            <person name="Baker S.G."/>
            <person name="Basham D."/>
            <person name="Bowman S."/>
            <person name="Brooks K."/>
            <person name="Brown D."/>
            <person name="Brown S."/>
            <person name="Chillingworth T."/>
            <person name="Churcher C.M."/>
            <person name="Collins M."/>
            <person name="Connor R."/>
            <person name="Cronin A."/>
            <person name="Davis P."/>
            <person name="Feltwell T."/>
            <person name="Fraser A."/>
            <person name="Gentles S."/>
            <person name="Goble A."/>
            <person name="Hamlin N."/>
            <person name="Harris D.E."/>
            <person name="Hidalgo J."/>
            <person name="Hodgson G."/>
            <person name="Holroyd S."/>
            <person name="Hornsby T."/>
            <person name="Howarth S."/>
            <person name="Huckle E.J."/>
            <person name="Hunt S."/>
            <person name="Jagels K."/>
            <person name="James K.D."/>
            <person name="Jones L."/>
            <person name="Jones M."/>
            <person name="Leather S."/>
            <person name="McDonald S."/>
            <person name="McLean J."/>
            <person name="Mooney P."/>
            <person name="Moule S."/>
            <person name="Mungall K.L."/>
            <person name="Murphy L.D."/>
            <person name="Niblett D."/>
            <person name="Odell C."/>
            <person name="Oliver K."/>
            <person name="O'Neil S."/>
            <person name="Pearson D."/>
            <person name="Quail M.A."/>
            <person name="Rabbinowitsch E."/>
            <person name="Rutherford K.M."/>
            <person name="Rutter S."/>
            <person name="Saunders D."/>
            <person name="Seeger K."/>
            <person name="Sharp S."/>
            <person name="Skelton J."/>
            <person name="Simmonds M.N."/>
            <person name="Squares R."/>
            <person name="Squares S."/>
            <person name="Stevens K."/>
            <person name="Taylor K."/>
            <person name="Taylor R.G."/>
            <person name="Tivey A."/>
            <person name="Walsh S.V."/>
            <person name="Warren T."/>
            <person name="Whitehead S."/>
            <person name="Woodward J.R."/>
            <person name="Volckaert G."/>
            <person name="Aert R."/>
            <person name="Robben J."/>
            <person name="Grymonprez B."/>
            <person name="Weltjens I."/>
            <person name="Vanstreels E."/>
            <person name="Rieger M."/>
            <person name="Schaefer M."/>
            <person name="Mueller-Auer S."/>
            <person name="Gabel C."/>
            <person name="Fuchs M."/>
            <person name="Duesterhoeft A."/>
            <person name="Fritzc C."/>
            <person name="Holzer E."/>
            <person name="Moestl D."/>
            <person name="Hilbert H."/>
            <person name="Borzym K."/>
            <person name="Langer I."/>
            <person name="Beck A."/>
            <person name="Lehrach H."/>
            <person name="Reinhardt R."/>
            <person name="Pohl T.M."/>
            <person name="Eger P."/>
            <person name="Zimmermann W."/>
            <person name="Wedler H."/>
            <person name="Wambutt R."/>
            <person name="Purnelle B."/>
            <person name="Goffeau A."/>
            <person name="Cadieu E."/>
            <person name="Dreano S."/>
            <person name="Gloux S."/>
            <person name="Lelaure V."/>
            <person name="Mottier S."/>
            <person name="Galibert F."/>
            <person name="Aves S.J."/>
            <person name="Xiang Z."/>
            <person name="Hunt C."/>
            <person name="Moore K."/>
            <person name="Hurst S.M."/>
            <person name="Lucas M."/>
            <person name="Rochet M."/>
            <person name="Gaillardin C."/>
            <person name="Tallada V.A."/>
            <person name="Garzon A."/>
            <person name="Thode G."/>
            <person name="Daga R.R."/>
            <person name="Cruzado L."/>
            <person name="Jimenez J."/>
            <person name="Sanchez M."/>
            <person name="del Rey F."/>
            <person name="Benito J."/>
            <person name="Dominguez A."/>
            <person name="Revuelta J.L."/>
            <person name="Moreno S."/>
            <person name="Armstrong J."/>
            <person name="Forsburg S.L."/>
            <person name="Cerutti L."/>
            <person name="Lowe T."/>
            <person name="McCombie W.R."/>
            <person name="Paulsen I."/>
            <person name="Potashkin J."/>
            <person name="Shpakovski G.V."/>
            <person name="Ussery D."/>
            <person name="Barrell B.G."/>
            <person name="Nurse P."/>
        </authorList>
    </citation>
    <scope>NUCLEOTIDE SEQUENCE [LARGE SCALE GENOMIC DNA]</scope>
    <source>
        <strain>972 / ATCC 24843</strain>
    </source>
</reference>
<reference key="2">
    <citation type="journal article" date="2006" name="Nat. Biotechnol.">
        <title>ORFeome cloning and global analysis of protein localization in the fission yeast Schizosaccharomyces pombe.</title>
        <authorList>
            <person name="Matsuyama A."/>
            <person name="Arai R."/>
            <person name="Yashiroda Y."/>
            <person name="Shirai A."/>
            <person name="Kamata A."/>
            <person name="Sekido S."/>
            <person name="Kobayashi Y."/>
            <person name="Hashimoto A."/>
            <person name="Hamamoto M."/>
            <person name="Hiraoka Y."/>
            <person name="Horinouchi S."/>
            <person name="Yoshida M."/>
        </authorList>
    </citation>
    <scope>SUBCELLULAR LOCATION [LARGE SCALE ANALYSIS]</scope>
</reference>